<gene>
    <name evidence="1" type="primary">hisS</name>
    <name type="ordered locus">BPEN_550</name>
</gene>
<reference key="1">
    <citation type="journal article" date="2005" name="Genome Res.">
        <title>Genome sequence of Blochmannia pennsylvanicus indicates parallel evolutionary trends among bacterial mutualists of insects.</title>
        <authorList>
            <person name="Degnan P.H."/>
            <person name="Lazarus A.B."/>
            <person name="Wernegreen J.J."/>
        </authorList>
    </citation>
    <scope>NUCLEOTIDE SEQUENCE [LARGE SCALE GENOMIC DNA]</scope>
    <source>
        <strain>BPEN</strain>
    </source>
</reference>
<protein>
    <recommendedName>
        <fullName evidence="1">Histidine--tRNA ligase</fullName>
        <ecNumber evidence="1">6.1.1.21</ecNumber>
    </recommendedName>
    <alternativeName>
        <fullName evidence="1">Histidyl-tRNA synthetase</fullName>
        <shortName evidence="1">HisRS</shortName>
    </alternativeName>
</protein>
<dbReference type="EC" id="6.1.1.21" evidence="1"/>
<dbReference type="EMBL" id="CP000016">
    <property type="protein sequence ID" value="AAZ41160.1"/>
    <property type="molecule type" value="Genomic_DNA"/>
</dbReference>
<dbReference type="RefSeq" id="WP_011283071.1">
    <property type="nucleotide sequence ID" value="NC_007292.1"/>
</dbReference>
<dbReference type="SMR" id="Q492E1"/>
<dbReference type="STRING" id="291272.BPEN_550"/>
<dbReference type="KEGG" id="bpn:BPEN_550"/>
<dbReference type="eggNOG" id="COG0124">
    <property type="taxonomic scope" value="Bacteria"/>
</dbReference>
<dbReference type="HOGENOM" id="CLU_025113_1_1_6"/>
<dbReference type="OrthoDB" id="9800814at2"/>
<dbReference type="Proteomes" id="UP000007794">
    <property type="component" value="Chromosome"/>
</dbReference>
<dbReference type="GO" id="GO:0005737">
    <property type="term" value="C:cytoplasm"/>
    <property type="evidence" value="ECO:0007669"/>
    <property type="project" value="UniProtKB-SubCell"/>
</dbReference>
<dbReference type="GO" id="GO:0005524">
    <property type="term" value="F:ATP binding"/>
    <property type="evidence" value="ECO:0007669"/>
    <property type="project" value="UniProtKB-UniRule"/>
</dbReference>
<dbReference type="GO" id="GO:0004821">
    <property type="term" value="F:histidine-tRNA ligase activity"/>
    <property type="evidence" value="ECO:0007669"/>
    <property type="project" value="UniProtKB-UniRule"/>
</dbReference>
<dbReference type="GO" id="GO:0006427">
    <property type="term" value="P:histidyl-tRNA aminoacylation"/>
    <property type="evidence" value="ECO:0007669"/>
    <property type="project" value="UniProtKB-UniRule"/>
</dbReference>
<dbReference type="CDD" id="cd00773">
    <property type="entry name" value="HisRS-like_core"/>
    <property type="match status" value="1"/>
</dbReference>
<dbReference type="FunFam" id="3.30.930.10:FF:000005">
    <property type="entry name" value="Histidine--tRNA ligase"/>
    <property type="match status" value="1"/>
</dbReference>
<dbReference type="Gene3D" id="3.40.50.800">
    <property type="entry name" value="Anticodon-binding domain"/>
    <property type="match status" value="1"/>
</dbReference>
<dbReference type="Gene3D" id="3.30.930.10">
    <property type="entry name" value="Bira Bifunctional Protein, Domain 2"/>
    <property type="match status" value="1"/>
</dbReference>
<dbReference type="HAMAP" id="MF_00127">
    <property type="entry name" value="His_tRNA_synth"/>
    <property type="match status" value="1"/>
</dbReference>
<dbReference type="InterPro" id="IPR006195">
    <property type="entry name" value="aa-tRNA-synth_II"/>
</dbReference>
<dbReference type="InterPro" id="IPR045864">
    <property type="entry name" value="aa-tRNA-synth_II/BPL/LPL"/>
</dbReference>
<dbReference type="InterPro" id="IPR036621">
    <property type="entry name" value="Anticodon-bd_dom_sf"/>
</dbReference>
<dbReference type="InterPro" id="IPR015807">
    <property type="entry name" value="His-tRNA-ligase"/>
</dbReference>
<dbReference type="InterPro" id="IPR041715">
    <property type="entry name" value="HisRS-like_core"/>
</dbReference>
<dbReference type="InterPro" id="IPR004516">
    <property type="entry name" value="HisRS/HisZ"/>
</dbReference>
<dbReference type="NCBIfam" id="TIGR00442">
    <property type="entry name" value="hisS"/>
    <property type="match status" value="1"/>
</dbReference>
<dbReference type="PANTHER" id="PTHR43707:SF1">
    <property type="entry name" value="HISTIDINE--TRNA LIGASE, MITOCHONDRIAL-RELATED"/>
    <property type="match status" value="1"/>
</dbReference>
<dbReference type="PANTHER" id="PTHR43707">
    <property type="entry name" value="HISTIDYL-TRNA SYNTHETASE"/>
    <property type="match status" value="1"/>
</dbReference>
<dbReference type="Pfam" id="PF13393">
    <property type="entry name" value="tRNA-synt_His"/>
    <property type="match status" value="1"/>
</dbReference>
<dbReference type="PIRSF" id="PIRSF001549">
    <property type="entry name" value="His-tRNA_synth"/>
    <property type="match status" value="1"/>
</dbReference>
<dbReference type="SUPFAM" id="SSF52954">
    <property type="entry name" value="Class II aaRS ABD-related"/>
    <property type="match status" value="1"/>
</dbReference>
<dbReference type="SUPFAM" id="SSF55681">
    <property type="entry name" value="Class II aaRS and biotin synthetases"/>
    <property type="match status" value="1"/>
</dbReference>
<dbReference type="PROSITE" id="PS50862">
    <property type="entry name" value="AA_TRNA_LIGASE_II"/>
    <property type="match status" value="1"/>
</dbReference>
<comment type="catalytic activity">
    <reaction evidence="1">
        <text>tRNA(His) + L-histidine + ATP = L-histidyl-tRNA(His) + AMP + diphosphate + H(+)</text>
        <dbReference type="Rhea" id="RHEA:17313"/>
        <dbReference type="Rhea" id="RHEA-COMP:9665"/>
        <dbReference type="Rhea" id="RHEA-COMP:9689"/>
        <dbReference type="ChEBI" id="CHEBI:15378"/>
        <dbReference type="ChEBI" id="CHEBI:30616"/>
        <dbReference type="ChEBI" id="CHEBI:33019"/>
        <dbReference type="ChEBI" id="CHEBI:57595"/>
        <dbReference type="ChEBI" id="CHEBI:78442"/>
        <dbReference type="ChEBI" id="CHEBI:78527"/>
        <dbReference type="ChEBI" id="CHEBI:456215"/>
        <dbReference type="EC" id="6.1.1.21"/>
    </reaction>
</comment>
<comment type="subunit">
    <text evidence="1">Homodimer.</text>
</comment>
<comment type="subcellular location">
    <subcellularLocation>
        <location evidence="1">Cytoplasm</location>
    </subcellularLocation>
</comment>
<comment type="similarity">
    <text evidence="1">Belongs to the class-II aminoacyl-tRNA synthetase family.</text>
</comment>
<accession>Q492E1</accession>
<name>SYH_BLOPB</name>
<evidence type="ECO:0000255" key="1">
    <source>
        <dbReference type="HAMAP-Rule" id="MF_00127"/>
    </source>
</evidence>
<feature type="chain" id="PRO_0000136116" description="Histidine--tRNA ligase">
    <location>
        <begin position="1"/>
        <end position="438"/>
    </location>
</feature>
<keyword id="KW-0030">Aminoacyl-tRNA synthetase</keyword>
<keyword id="KW-0067">ATP-binding</keyword>
<keyword id="KW-0963">Cytoplasm</keyword>
<keyword id="KW-0436">Ligase</keyword>
<keyword id="KW-0547">Nucleotide-binding</keyword>
<keyword id="KW-0648">Protein biosynthesis</keyword>
<keyword id="KW-1185">Reference proteome</keyword>
<sequence length="438" mass="50693">MLKYDKNIQSVRGMHDYLPKDTILWQYIENILITILDSYGYKEIRFPIIEDTNLFKRSIGEVTDVIEKEMYNFTDRNGNNLTLRPEGTSGCVRAGIKHGLFYHQEQRLWYLGPMFRYERPQKGRYRQFHQFSAEAFGQIGPDIDAELILITARCWKKLGINHHLSLELNSIGSLSSRINYRKKLITFLEKNLSNLDSNALRRLYSNPLRILDTKNTKTKELLLNAPILSDYLDDDSRVHFSELCQLLNLLGVPYRVNPYLVRGLDYYNKTVFEWVTDSLGVKKTICAGGRYDELVQELGGYSAPAIGFSIGLERVILLIQEINNISILHKNIYIDVYFISIGDNSRKHAMLLSENIRSTLPSLRLMVHHGGDDIKKQFYCANKHKPQIVLIMNEKNALDKTIILKNLQSKTQEILKHDAVSERLKHILHITCNSTDNK</sequence>
<organism>
    <name type="scientific">Blochmanniella pennsylvanica (strain BPEN)</name>
    <dbReference type="NCBI Taxonomy" id="291272"/>
    <lineage>
        <taxon>Bacteria</taxon>
        <taxon>Pseudomonadati</taxon>
        <taxon>Pseudomonadota</taxon>
        <taxon>Gammaproteobacteria</taxon>
        <taxon>Enterobacterales</taxon>
        <taxon>Enterobacteriaceae</taxon>
        <taxon>ant endosymbionts</taxon>
        <taxon>Candidatus Blochmanniella</taxon>
    </lineage>
</organism>
<proteinExistence type="inferred from homology"/>